<sequence>MEVHNVDLTISAVSDEQYPKTNIPEIALVGRSNVGKSSLTNVLINRRNFAHTSSQPGKTQTLNFYDVEDKVYFVDVPGYGYAKVSKKERERFGKMIEQYLTQREQLRGVIQLVDARHEPTPDDVNMYNWLQYYNIPTLIVGTKIDKVKRSAWNRQLSLIKKTLDVESSTPIILFSATEKKGKDDVWQWIEERMGKN</sequence>
<evidence type="ECO:0000255" key="1">
    <source>
        <dbReference type="HAMAP-Rule" id="MF_00321"/>
    </source>
</evidence>
<reference key="1">
    <citation type="journal article" date="2008" name="DNA Res.">
        <title>Comparative genome analysis of Lactobacillus reuteri and Lactobacillus fermentum reveal a genomic island for reuterin and cobalamin production.</title>
        <authorList>
            <person name="Morita H."/>
            <person name="Toh H."/>
            <person name="Fukuda S."/>
            <person name="Horikawa H."/>
            <person name="Oshima K."/>
            <person name="Suzuki T."/>
            <person name="Murakami M."/>
            <person name="Hisamatsu S."/>
            <person name="Kato Y."/>
            <person name="Takizawa T."/>
            <person name="Fukuoka H."/>
            <person name="Yoshimura T."/>
            <person name="Itoh K."/>
            <person name="O'Sullivan D.J."/>
            <person name="McKay L.L."/>
            <person name="Ohno H."/>
            <person name="Kikuchi J."/>
            <person name="Masaoka T."/>
            <person name="Hattori M."/>
        </authorList>
    </citation>
    <scope>NUCLEOTIDE SEQUENCE [LARGE SCALE GENOMIC DNA]</scope>
    <source>
        <strain>JCM 1112</strain>
    </source>
</reference>
<proteinExistence type="inferred from homology"/>
<dbReference type="EMBL" id="AP007281">
    <property type="protein sequence ID" value="BAG25147.1"/>
    <property type="molecule type" value="Genomic_DNA"/>
</dbReference>
<dbReference type="SMR" id="B2G6R5"/>
<dbReference type="KEGG" id="lrf:LAR_0631"/>
<dbReference type="HOGENOM" id="CLU_033732_3_0_9"/>
<dbReference type="GO" id="GO:0005829">
    <property type="term" value="C:cytosol"/>
    <property type="evidence" value="ECO:0007669"/>
    <property type="project" value="TreeGrafter"/>
</dbReference>
<dbReference type="GO" id="GO:0005525">
    <property type="term" value="F:GTP binding"/>
    <property type="evidence" value="ECO:0007669"/>
    <property type="project" value="UniProtKB-UniRule"/>
</dbReference>
<dbReference type="GO" id="GO:0046872">
    <property type="term" value="F:metal ion binding"/>
    <property type="evidence" value="ECO:0007669"/>
    <property type="project" value="UniProtKB-KW"/>
</dbReference>
<dbReference type="GO" id="GO:0000917">
    <property type="term" value="P:division septum assembly"/>
    <property type="evidence" value="ECO:0007669"/>
    <property type="project" value="UniProtKB-KW"/>
</dbReference>
<dbReference type="CDD" id="cd01876">
    <property type="entry name" value="YihA_EngB"/>
    <property type="match status" value="1"/>
</dbReference>
<dbReference type="FunFam" id="3.40.50.300:FF:000098">
    <property type="entry name" value="Probable GTP-binding protein EngB"/>
    <property type="match status" value="1"/>
</dbReference>
<dbReference type="Gene3D" id="3.40.50.300">
    <property type="entry name" value="P-loop containing nucleotide triphosphate hydrolases"/>
    <property type="match status" value="1"/>
</dbReference>
<dbReference type="HAMAP" id="MF_00321">
    <property type="entry name" value="GTPase_EngB"/>
    <property type="match status" value="1"/>
</dbReference>
<dbReference type="InterPro" id="IPR030393">
    <property type="entry name" value="G_ENGB_dom"/>
</dbReference>
<dbReference type="InterPro" id="IPR006073">
    <property type="entry name" value="GTP-bd"/>
</dbReference>
<dbReference type="InterPro" id="IPR019987">
    <property type="entry name" value="GTP-bd_ribosome_bio_YsxC"/>
</dbReference>
<dbReference type="InterPro" id="IPR027417">
    <property type="entry name" value="P-loop_NTPase"/>
</dbReference>
<dbReference type="InterPro" id="IPR005225">
    <property type="entry name" value="Small_GTP-bd"/>
</dbReference>
<dbReference type="NCBIfam" id="TIGR03598">
    <property type="entry name" value="GTPase_YsxC"/>
    <property type="match status" value="1"/>
</dbReference>
<dbReference type="NCBIfam" id="TIGR00231">
    <property type="entry name" value="small_GTP"/>
    <property type="match status" value="1"/>
</dbReference>
<dbReference type="PANTHER" id="PTHR11649:SF13">
    <property type="entry name" value="ENGB-TYPE G DOMAIN-CONTAINING PROTEIN"/>
    <property type="match status" value="1"/>
</dbReference>
<dbReference type="PANTHER" id="PTHR11649">
    <property type="entry name" value="MSS1/TRME-RELATED GTP-BINDING PROTEIN"/>
    <property type="match status" value="1"/>
</dbReference>
<dbReference type="Pfam" id="PF01926">
    <property type="entry name" value="MMR_HSR1"/>
    <property type="match status" value="1"/>
</dbReference>
<dbReference type="SUPFAM" id="SSF52540">
    <property type="entry name" value="P-loop containing nucleoside triphosphate hydrolases"/>
    <property type="match status" value="1"/>
</dbReference>
<dbReference type="PROSITE" id="PS51706">
    <property type="entry name" value="G_ENGB"/>
    <property type="match status" value="1"/>
</dbReference>
<feature type="chain" id="PRO_1000115984" description="Probable GTP-binding protein EngB">
    <location>
        <begin position="1"/>
        <end position="196"/>
    </location>
</feature>
<feature type="domain" description="EngB-type G" evidence="1">
    <location>
        <begin position="22"/>
        <end position="195"/>
    </location>
</feature>
<feature type="binding site" evidence="1">
    <location>
        <begin position="30"/>
        <end position="37"/>
    </location>
    <ligand>
        <name>GTP</name>
        <dbReference type="ChEBI" id="CHEBI:37565"/>
    </ligand>
</feature>
<feature type="binding site" evidence="1">
    <location>
        <position position="37"/>
    </location>
    <ligand>
        <name>Mg(2+)</name>
        <dbReference type="ChEBI" id="CHEBI:18420"/>
    </ligand>
</feature>
<feature type="binding site" evidence="1">
    <location>
        <begin position="57"/>
        <end position="61"/>
    </location>
    <ligand>
        <name>GTP</name>
        <dbReference type="ChEBI" id="CHEBI:37565"/>
    </ligand>
</feature>
<feature type="binding site" evidence="1">
    <location>
        <position position="59"/>
    </location>
    <ligand>
        <name>Mg(2+)</name>
        <dbReference type="ChEBI" id="CHEBI:18420"/>
    </ligand>
</feature>
<feature type="binding site" evidence="1">
    <location>
        <begin position="75"/>
        <end position="78"/>
    </location>
    <ligand>
        <name>GTP</name>
        <dbReference type="ChEBI" id="CHEBI:37565"/>
    </ligand>
</feature>
<feature type="binding site" evidence="1">
    <location>
        <begin position="142"/>
        <end position="145"/>
    </location>
    <ligand>
        <name>GTP</name>
        <dbReference type="ChEBI" id="CHEBI:37565"/>
    </ligand>
</feature>
<feature type="binding site" evidence="1">
    <location>
        <begin position="174"/>
        <end position="176"/>
    </location>
    <ligand>
        <name>GTP</name>
        <dbReference type="ChEBI" id="CHEBI:37565"/>
    </ligand>
</feature>
<keyword id="KW-0131">Cell cycle</keyword>
<keyword id="KW-0132">Cell division</keyword>
<keyword id="KW-0342">GTP-binding</keyword>
<keyword id="KW-0460">Magnesium</keyword>
<keyword id="KW-0479">Metal-binding</keyword>
<keyword id="KW-0547">Nucleotide-binding</keyword>
<keyword id="KW-0717">Septation</keyword>
<gene>
    <name evidence="1" type="primary">engB</name>
    <name type="ordered locus">LAR_0631</name>
</gene>
<name>ENGB_LIMRJ</name>
<comment type="function">
    <text evidence="1">Necessary for normal cell division and for the maintenance of normal septation.</text>
</comment>
<comment type="cofactor">
    <cofactor evidence="1">
        <name>Mg(2+)</name>
        <dbReference type="ChEBI" id="CHEBI:18420"/>
    </cofactor>
</comment>
<comment type="similarity">
    <text evidence="1">Belongs to the TRAFAC class TrmE-Era-EngA-EngB-Septin-like GTPase superfamily. EngB GTPase family.</text>
</comment>
<organism>
    <name type="scientific">Limosilactobacillus reuteri subsp. reuteri (strain JCM 1112)</name>
    <name type="common">Lactobacillus reuteri</name>
    <dbReference type="NCBI Taxonomy" id="557433"/>
    <lineage>
        <taxon>Bacteria</taxon>
        <taxon>Bacillati</taxon>
        <taxon>Bacillota</taxon>
        <taxon>Bacilli</taxon>
        <taxon>Lactobacillales</taxon>
        <taxon>Lactobacillaceae</taxon>
        <taxon>Limosilactobacillus</taxon>
    </lineage>
</organism>
<accession>B2G6R5</accession>
<protein>
    <recommendedName>
        <fullName evidence="1">Probable GTP-binding protein EngB</fullName>
    </recommendedName>
</protein>